<sequence>MAVASRLAVARVAPDGGAAGRRRRRGRPVVAVPTAGRGRGGAVAASPPTEEAVQMTEPLTKEDLVAYLVSGCKPKENWRIGTEHEKFGFEVDTLRPIKYDQIRDILNGLAERFDWDKIVEENNVIGLKQGKQSISLEPGGQFELSGAPLETLHQTCAEVNSHLYQVKAVGEEMGIGFLGIGFQPKWALSDIPIMPKGRYEIMRNYMPKVGSLGLDMMFRTCTVQVNLDFSSEQDMIRKFHTGLALQPIATAIFANSPFKEGKPNGYLSLRSHIWTDTDNNRSGMLPFVFDDSFGFERYVDYALDVPMYFVYRNKKYIDCTGMSFRDFMVGKLPQAPGELPTLNDWENHLTTIFPEVRLKRYLEMRGADGGPWRRLCALPAFWVGLLYDEESLQSISDMTSDWTNEEREMLRRKVPVTGLKTPFRDGYVRDLAEEILQLSKNGLERRGYKEVGFLREVDAVISSGVTPAERLLNLYETKWQRSVDPVFQELLY</sequence>
<feature type="transit peptide" description="Chloroplast" evidence="2">
    <location>
        <begin position="1"/>
        <end status="unknown"/>
    </location>
</feature>
<feature type="chain" id="PRO_0000333021" description="Glutamate--cysteine ligase A, chloroplastic">
    <location>
        <begin status="unknown"/>
        <end position="492"/>
    </location>
</feature>
<feature type="disulfide bond" evidence="1">
    <location>
        <begin position="156"/>
        <end position="376"/>
    </location>
</feature>
<feature type="sequence conflict" description="In Ref. 1; CAD48598/CAD48599." evidence="3" ref="1">
    <original>H</original>
    <variation>R</variation>
    <location>
        <position position="240"/>
    </location>
</feature>
<gene>
    <name type="primary">GSH1-1</name>
    <name type="ORF">OsI_18304</name>
</gene>
<name>GSH1A_ORYSI</name>
<keyword id="KW-0067">ATP-binding</keyword>
<keyword id="KW-0150">Chloroplast</keyword>
<keyword id="KW-1015">Disulfide bond</keyword>
<keyword id="KW-0317">Glutathione biosynthesis</keyword>
<keyword id="KW-0436">Ligase</keyword>
<keyword id="KW-0547">Nucleotide-binding</keyword>
<keyword id="KW-0934">Plastid</keyword>
<keyword id="KW-1185">Reference proteome</keyword>
<keyword id="KW-0809">Transit peptide</keyword>
<evidence type="ECO:0000250" key="1"/>
<evidence type="ECO:0000255" key="2"/>
<evidence type="ECO:0000305" key="3"/>
<proteinExistence type="evidence at transcript level"/>
<organism>
    <name type="scientific">Oryza sativa subsp. indica</name>
    <name type="common">Rice</name>
    <dbReference type="NCBI Taxonomy" id="39946"/>
    <lineage>
        <taxon>Eukaryota</taxon>
        <taxon>Viridiplantae</taxon>
        <taxon>Streptophyta</taxon>
        <taxon>Embryophyta</taxon>
        <taxon>Tracheophyta</taxon>
        <taxon>Spermatophyta</taxon>
        <taxon>Magnoliopsida</taxon>
        <taxon>Liliopsida</taxon>
        <taxon>Poales</taxon>
        <taxon>Poaceae</taxon>
        <taxon>BOP clade</taxon>
        <taxon>Oryzoideae</taxon>
        <taxon>Oryzeae</taxon>
        <taxon>Oryzinae</taxon>
        <taxon>Oryza</taxon>
        <taxon>Oryza sativa</taxon>
    </lineage>
</organism>
<dbReference type="EC" id="6.3.2.2"/>
<dbReference type="EMBL" id="AJ508915">
    <property type="protein sequence ID" value="CAD48598.1"/>
    <property type="status" value="ALT_INIT"/>
    <property type="molecule type" value="Genomic_DNA"/>
</dbReference>
<dbReference type="EMBL" id="AJ508916">
    <property type="protein sequence ID" value="CAD48599.3"/>
    <property type="molecule type" value="mRNA"/>
</dbReference>
<dbReference type="EMBL" id="CM000130">
    <property type="protein sequence ID" value="EEC78447.1"/>
    <property type="molecule type" value="Genomic_DNA"/>
</dbReference>
<dbReference type="SMR" id="Q8GU95"/>
<dbReference type="STRING" id="39946.Q8GU95"/>
<dbReference type="EnsemblPlants" id="BGIOSGA019114-TA">
    <property type="protein sequence ID" value="BGIOSGA019114-PA"/>
    <property type="gene ID" value="BGIOSGA019114"/>
</dbReference>
<dbReference type="EnsemblPlants" id="OsLima_05g0002120.01">
    <property type="protein sequence ID" value="OsLima_05g0002120.01"/>
    <property type="gene ID" value="OsLima_05g0002120"/>
</dbReference>
<dbReference type="EnsemblPlants" id="OsLima_05g0002120.02">
    <property type="protein sequence ID" value="OsLima_05g0002120.02"/>
    <property type="gene ID" value="OsLima_05g0002120"/>
</dbReference>
<dbReference type="Gramene" id="BGIOSGA019114-TA">
    <property type="protein sequence ID" value="BGIOSGA019114-PA"/>
    <property type="gene ID" value="BGIOSGA019114"/>
</dbReference>
<dbReference type="Gramene" id="OsLima_05g0002120.01">
    <property type="protein sequence ID" value="OsLima_05g0002120.01"/>
    <property type="gene ID" value="OsLima_05g0002120"/>
</dbReference>
<dbReference type="Gramene" id="OsLima_05g0002120.02">
    <property type="protein sequence ID" value="OsLima_05g0002120.02"/>
    <property type="gene ID" value="OsLima_05g0002120"/>
</dbReference>
<dbReference type="HOGENOM" id="CLU_026610_0_0_1"/>
<dbReference type="OMA" id="WADHLTT"/>
<dbReference type="UniPathway" id="UPA00142">
    <property type="reaction ID" value="UER00209"/>
</dbReference>
<dbReference type="Proteomes" id="UP000007015">
    <property type="component" value="Chromosome 5"/>
</dbReference>
<dbReference type="GO" id="GO:0009507">
    <property type="term" value="C:chloroplast"/>
    <property type="evidence" value="ECO:0007669"/>
    <property type="project" value="UniProtKB-SubCell"/>
</dbReference>
<dbReference type="GO" id="GO:0005524">
    <property type="term" value="F:ATP binding"/>
    <property type="evidence" value="ECO:0007669"/>
    <property type="project" value="UniProtKB-KW"/>
</dbReference>
<dbReference type="GO" id="GO:0004357">
    <property type="term" value="F:glutamate-cysteine ligase activity"/>
    <property type="evidence" value="ECO:0007669"/>
    <property type="project" value="UniProtKB-EC"/>
</dbReference>
<dbReference type="GO" id="GO:0006750">
    <property type="term" value="P:glutathione biosynthetic process"/>
    <property type="evidence" value="ECO:0007669"/>
    <property type="project" value="UniProtKB-UniPathway"/>
</dbReference>
<dbReference type="FunFam" id="3.30.590.20:FF:000003">
    <property type="entry name" value="Glutamate--cysteine ligase"/>
    <property type="match status" value="1"/>
</dbReference>
<dbReference type="Gene3D" id="3.30.590.20">
    <property type="match status" value="1"/>
</dbReference>
<dbReference type="InterPro" id="IPR035434">
    <property type="entry name" value="GCL_bact_plant"/>
</dbReference>
<dbReference type="InterPro" id="IPR006336">
    <property type="entry name" value="GCS2"/>
</dbReference>
<dbReference type="InterPro" id="IPR014746">
    <property type="entry name" value="Gln_synth/guanido_kin_cat_dom"/>
</dbReference>
<dbReference type="InterPro" id="IPR011556">
    <property type="entry name" value="Glut_cys_lig_pln_type"/>
</dbReference>
<dbReference type="NCBIfam" id="TIGR01436">
    <property type="entry name" value="glu_cys_lig_pln"/>
    <property type="match status" value="1"/>
</dbReference>
<dbReference type="PANTHER" id="PTHR34378">
    <property type="entry name" value="GLUTAMATE--CYSTEINE LIGASE, CHLOROPLASTIC"/>
    <property type="match status" value="1"/>
</dbReference>
<dbReference type="PANTHER" id="PTHR34378:SF1">
    <property type="entry name" value="GLUTAMATE--CYSTEINE LIGASE, CHLOROPLASTIC"/>
    <property type="match status" value="1"/>
</dbReference>
<dbReference type="Pfam" id="PF04107">
    <property type="entry name" value="GCS2"/>
    <property type="match status" value="1"/>
</dbReference>
<dbReference type="PIRSF" id="PIRSF017901">
    <property type="entry name" value="GCL"/>
    <property type="match status" value="1"/>
</dbReference>
<dbReference type="SUPFAM" id="SSF55931">
    <property type="entry name" value="Glutamine synthetase/guanido kinase"/>
    <property type="match status" value="1"/>
</dbReference>
<accession>Q8GU95</accession>
<accession>A2XZZ8</accession>
<accession>B8AXK6</accession>
<accession>Q8GU96</accession>
<protein>
    <recommendedName>
        <fullName>Glutamate--cysteine ligase A, chloroplastic</fullName>
        <ecNumber>6.3.2.2</ecNumber>
    </recommendedName>
    <alternativeName>
        <fullName>Gamma-ECS A</fullName>
        <shortName>GCS A</shortName>
    </alternativeName>
    <alternativeName>
        <fullName>Gamma-glutamylcysteine synthetase A</fullName>
    </alternativeName>
</protein>
<comment type="catalytic activity">
    <reaction>
        <text>L-cysteine + L-glutamate + ATP = gamma-L-glutamyl-L-cysteine + ADP + phosphate + H(+)</text>
        <dbReference type="Rhea" id="RHEA:13285"/>
        <dbReference type="ChEBI" id="CHEBI:15378"/>
        <dbReference type="ChEBI" id="CHEBI:29985"/>
        <dbReference type="ChEBI" id="CHEBI:30616"/>
        <dbReference type="ChEBI" id="CHEBI:35235"/>
        <dbReference type="ChEBI" id="CHEBI:43474"/>
        <dbReference type="ChEBI" id="CHEBI:58173"/>
        <dbReference type="ChEBI" id="CHEBI:456216"/>
        <dbReference type="EC" id="6.3.2.2"/>
    </reaction>
</comment>
<comment type="pathway">
    <text>Sulfur metabolism; glutathione biosynthesis; glutathione from L-cysteine and L-glutamate: step 1/2.</text>
</comment>
<comment type="subunit">
    <text evidence="1">Homodimer or monomer when oxidized or reduced, respectively.</text>
</comment>
<comment type="subcellular location">
    <subcellularLocation>
        <location evidence="1">Plastid</location>
        <location evidence="1">Chloroplast</location>
    </subcellularLocation>
</comment>
<comment type="PTM">
    <text evidence="1">The Cys-156-Cys-376 disulfide bridge is known to modulate the enzyme activity according to the redox status. The oxidized form constitutes the active enzyme (By similarity).</text>
</comment>
<comment type="similarity">
    <text evidence="3">Belongs to the carboxylate-amine ligase family. Glutamate--cysteine ligase type 2 subfamily.</text>
</comment>
<comment type="sequence caution" evidence="3">
    <conflict type="erroneous initiation">
        <sequence resource="EMBL-CDS" id="CAD48598"/>
    </conflict>
</comment>
<reference key="1">
    <citation type="thesis" date="2003" institute="Institute of Plant Physiology and Ecology" country="China">
        <title>The functional analysis of gamma-glutamylcysteine synthetase gene in Oryza sativa.</title>
        <authorList>
            <person name="Peng L.T."/>
        </authorList>
    </citation>
    <scope>NUCLEOTIDE SEQUENCE [GENOMIC DNA / MRNA]</scope>
</reference>
<reference key="2">
    <citation type="journal article" date="2005" name="PLoS Biol.">
        <title>The genomes of Oryza sativa: a history of duplications.</title>
        <authorList>
            <person name="Yu J."/>
            <person name="Wang J."/>
            <person name="Lin W."/>
            <person name="Li S."/>
            <person name="Li H."/>
            <person name="Zhou J."/>
            <person name="Ni P."/>
            <person name="Dong W."/>
            <person name="Hu S."/>
            <person name="Zeng C."/>
            <person name="Zhang J."/>
            <person name="Zhang Y."/>
            <person name="Li R."/>
            <person name="Xu Z."/>
            <person name="Li S."/>
            <person name="Li X."/>
            <person name="Zheng H."/>
            <person name="Cong L."/>
            <person name="Lin L."/>
            <person name="Yin J."/>
            <person name="Geng J."/>
            <person name="Li G."/>
            <person name="Shi J."/>
            <person name="Liu J."/>
            <person name="Lv H."/>
            <person name="Li J."/>
            <person name="Wang J."/>
            <person name="Deng Y."/>
            <person name="Ran L."/>
            <person name="Shi X."/>
            <person name="Wang X."/>
            <person name="Wu Q."/>
            <person name="Li C."/>
            <person name="Ren X."/>
            <person name="Wang J."/>
            <person name="Wang X."/>
            <person name="Li D."/>
            <person name="Liu D."/>
            <person name="Zhang X."/>
            <person name="Ji Z."/>
            <person name="Zhao W."/>
            <person name="Sun Y."/>
            <person name="Zhang Z."/>
            <person name="Bao J."/>
            <person name="Han Y."/>
            <person name="Dong L."/>
            <person name="Ji J."/>
            <person name="Chen P."/>
            <person name="Wu S."/>
            <person name="Liu J."/>
            <person name="Xiao Y."/>
            <person name="Bu D."/>
            <person name="Tan J."/>
            <person name="Yang L."/>
            <person name="Ye C."/>
            <person name="Zhang J."/>
            <person name="Xu J."/>
            <person name="Zhou Y."/>
            <person name="Yu Y."/>
            <person name="Zhang B."/>
            <person name="Zhuang S."/>
            <person name="Wei H."/>
            <person name="Liu B."/>
            <person name="Lei M."/>
            <person name="Yu H."/>
            <person name="Li Y."/>
            <person name="Xu H."/>
            <person name="Wei S."/>
            <person name="He X."/>
            <person name="Fang L."/>
            <person name="Zhang Z."/>
            <person name="Zhang Y."/>
            <person name="Huang X."/>
            <person name="Su Z."/>
            <person name="Tong W."/>
            <person name="Li J."/>
            <person name="Tong Z."/>
            <person name="Li S."/>
            <person name="Ye J."/>
            <person name="Wang L."/>
            <person name="Fang L."/>
            <person name="Lei T."/>
            <person name="Chen C.-S."/>
            <person name="Chen H.-C."/>
            <person name="Xu Z."/>
            <person name="Li H."/>
            <person name="Huang H."/>
            <person name="Zhang F."/>
            <person name="Xu H."/>
            <person name="Li N."/>
            <person name="Zhao C."/>
            <person name="Li S."/>
            <person name="Dong L."/>
            <person name="Huang Y."/>
            <person name="Li L."/>
            <person name="Xi Y."/>
            <person name="Qi Q."/>
            <person name="Li W."/>
            <person name="Zhang B."/>
            <person name="Hu W."/>
            <person name="Zhang Y."/>
            <person name="Tian X."/>
            <person name="Jiao Y."/>
            <person name="Liang X."/>
            <person name="Jin J."/>
            <person name="Gao L."/>
            <person name="Zheng W."/>
            <person name="Hao B."/>
            <person name="Liu S.-M."/>
            <person name="Wang W."/>
            <person name="Yuan L."/>
            <person name="Cao M."/>
            <person name="McDermott J."/>
            <person name="Samudrala R."/>
            <person name="Wang J."/>
            <person name="Wong G.K.-S."/>
            <person name="Yang H."/>
        </authorList>
    </citation>
    <scope>NUCLEOTIDE SEQUENCE [LARGE SCALE GENOMIC DNA]</scope>
    <source>
        <strain>cv. 93-11</strain>
    </source>
</reference>